<organism>
    <name type="scientific">Cuscuta gronovii</name>
    <name type="common">Common dodder</name>
    <name type="synonym">Epithymum gronovii</name>
    <dbReference type="NCBI Taxonomy" id="35886"/>
    <lineage>
        <taxon>Eukaryota</taxon>
        <taxon>Viridiplantae</taxon>
        <taxon>Streptophyta</taxon>
        <taxon>Embryophyta</taxon>
        <taxon>Tracheophyta</taxon>
        <taxon>Spermatophyta</taxon>
        <taxon>Magnoliopsida</taxon>
        <taxon>eudicotyledons</taxon>
        <taxon>Gunneridae</taxon>
        <taxon>Pentapetalae</taxon>
        <taxon>asterids</taxon>
        <taxon>lamiids</taxon>
        <taxon>Solanales</taxon>
        <taxon>Convolvulaceae</taxon>
        <taxon>Cuscuteae</taxon>
        <taxon>Cuscuta</taxon>
        <taxon>Cuscuta subgen. Grammica</taxon>
        <taxon>Cuscuta sect. Oxycarpae</taxon>
    </lineage>
</organism>
<feature type="chain" id="PRO_0000356797" description="Large ribosomal subunit protein bL33c">
    <location>
        <begin position="1"/>
        <end position="66"/>
    </location>
</feature>
<name>RK33_CUSGR</name>
<protein>
    <recommendedName>
        <fullName evidence="1">Large ribosomal subunit protein bL33c</fullName>
    </recommendedName>
    <alternativeName>
        <fullName evidence="2">50S ribosomal protein L33, plastid</fullName>
    </alternativeName>
</protein>
<evidence type="ECO:0000255" key="1">
    <source>
        <dbReference type="HAMAP-Rule" id="MF_00294"/>
    </source>
</evidence>
<evidence type="ECO:0000305" key="2"/>
<reference key="1">
    <citation type="journal article" date="2007" name="BMC Plant Biol.">
        <title>Complete DNA sequences of the plastid genomes of two parasitic flowering plant species, Cuscuta reflexa and Cuscuta gronovii.</title>
        <authorList>
            <person name="Funk H.T."/>
            <person name="Berg S."/>
            <person name="Krupinska K."/>
            <person name="Maier U.-G."/>
            <person name="Krause K."/>
        </authorList>
    </citation>
    <scope>NUCLEOTIDE SEQUENCE [LARGE SCALE GENOMIC DNA]</scope>
</reference>
<geneLocation type="plastid"/>
<gene>
    <name evidence="1" type="primary">rpl33</name>
</gene>
<accession>A7M918</accession>
<sequence length="66" mass="7761">MEKKKGVRGKIILECTGCVRNSHNRVSKGVSRYITQKNRHNTPNRLELKKFCPRCYKHIIHGEIKK</sequence>
<proteinExistence type="inferred from homology"/>
<dbReference type="EMBL" id="AM711639">
    <property type="protein sequence ID" value="CAM98346.1"/>
    <property type="molecule type" value="Genomic_DNA"/>
</dbReference>
<dbReference type="RefSeq" id="YP_001430060.1">
    <property type="nucleotide sequence ID" value="NC_009765.1"/>
</dbReference>
<dbReference type="GeneID" id="5536734"/>
<dbReference type="GO" id="GO:0009536">
    <property type="term" value="C:plastid"/>
    <property type="evidence" value="ECO:0007669"/>
    <property type="project" value="UniProtKB-SubCell"/>
</dbReference>
<dbReference type="GO" id="GO:1990904">
    <property type="term" value="C:ribonucleoprotein complex"/>
    <property type="evidence" value="ECO:0007669"/>
    <property type="project" value="UniProtKB-KW"/>
</dbReference>
<dbReference type="GO" id="GO:0005840">
    <property type="term" value="C:ribosome"/>
    <property type="evidence" value="ECO:0007669"/>
    <property type="project" value="UniProtKB-KW"/>
</dbReference>
<dbReference type="GO" id="GO:0003735">
    <property type="term" value="F:structural constituent of ribosome"/>
    <property type="evidence" value="ECO:0007669"/>
    <property type="project" value="InterPro"/>
</dbReference>
<dbReference type="GO" id="GO:0006412">
    <property type="term" value="P:translation"/>
    <property type="evidence" value="ECO:0007669"/>
    <property type="project" value="InterPro"/>
</dbReference>
<dbReference type="Gene3D" id="2.20.28.120">
    <property type="entry name" value="Ribosomal protein L33"/>
    <property type="match status" value="1"/>
</dbReference>
<dbReference type="HAMAP" id="MF_00294">
    <property type="entry name" value="Ribosomal_bL33"/>
    <property type="match status" value="1"/>
</dbReference>
<dbReference type="InterPro" id="IPR001705">
    <property type="entry name" value="Ribosomal_bL33"/>
</dbReference>
<dbReference type="InterPro" id="IPR018264">
    <property type="entry name" value="Ribosomal_bL33_CS"/>
</dbReference>
<dbReference type="InterPro" id="IPR038584">
    <property type="entry name" value="Ribosomal_bL33_sf"/>
</dbReference>
<dbReference type="InterPro" id="IPR011332">
    <property type="entry name" value="Ribosomal_zn-bd"/>
</dbReference>
<dbReference type="NCBIfam" id="NF001764">
    <property type="entry name" value="PRK00504.1"/>
    <property type="match status" value="1"/>
</dbReference>
<dbReference type="NCBIfam" id="NF001860">
    <property type="entry name" value="PRK00595.1"/>
    <property type="match status" value="1"/>
</dbReference>
<dbReference type="NCBIfam" id="TIGR01023">
    <property type="entry name" value="rpmG_bact"/>
    <property type="match status" value="1"/>
</dbReference>
<dbReference type="PANTHER" id="PTHR43168">
    <property type="entry name" value="50S RIBOSOMAL PROTEIN L33, CHLOROPLASTIC"/>
    <property type="match status" value="1"/>
</dbReference>
<dbReference type="PANTHER" id="PTHR43168:SF2">
    <property type="entry name" value="LARGE RIBOSOMAL SUBUNIT PROTEIN BL33C"/>
    <property type="match status" value="1"/>
</dbReference>
<dbReference type="Pfam" id="PF00471">
    <property type="entry name" value="Ribosomal_L33"/>
    <property type="match status" value="1"/>
</dbReference>
<dbReference type="SUPFAM" id="SSF57829">
    <property type="entry name" value="Zn-binding ribosomal proteins"/>
    <property type="match status" value="1"/>
</dbReference>
<dbReference type="PROSITE" id="PS00582">
    <property type="entry name" value="RIBOSOMAL_L33"/>
    <property type="match status" value="1"/>
</dbReference>
<keyword id="KW-0934">Plastid</keyword>
<keyword id="KW-0687">Ribonucleoprotein</keyword>
<keyword id="KW-0689">Ribosomal protein</keyword>
<comment type="subcellular location">
    <subcellularLocation>
        <location>Plastid</location>
    </subcellularLocation>
</comment>
<comment type="similarity">
    <text evidence="1">Belongs to the bacterial ribosomal protein bL33 family.</text>
</comment>
<comment type="caution">
    <text evidence="2">Young tissue from this organism is photosynthetic and contains some thylakoids, although the photosynthetic activity does not exceed the light compensation point.</text>
</comment>